<gene>
    <name evidence="1" type="primary">tyrS</name>
    <name type="ordered locus">bbp_115</name>
</gene>
<keyword id="KW-0030">Aminoacyl-tRNA synthetase</keyword>
<keyword id="KW-0067">ATP-binding</keyword>
<keyword id="KW-0963">Cytoplasm</keyword>
<keyword id="KW-0436">Ligase</keyword>
<keyword id="KW-0547">Nucleotide-binding</keyword>
<keyword id="KW-0648">Protein biosynthesis</keyword>
<keyword id="KW-1185">Reference proteome</keyword>
<keyword id="KW-0694">RNA-binding</keyword>
<organism>
    <name type="scientific">Buchnera aphidicola subsp. Baizongia pistaciae (strain Bp)</name>
    <dbReference type="NCBI Taxonomy" id="224915"/>
    <lineage>
        <taxon>Bacteria</taxon>
        <taxon>Pseudomonadati</taxon>
        <taxon>Pseudomonadota</taxon>
        <taxon>Gammaproteobacteria</taxon>
        <taxon>Enterobacterales</taxon>
        <taxon>Erwiniaceae</taxon>
        <taxon>Buchnera</taxon>
    </lineage>
</organism>
<evidence type="ECO:0000255" key="1">
    <source>
        <dbReference type="HAMAP-Rule" id="MF_02006"/>
    </source>
</evidence>
<accession>Q89AW3</accession>
<name>SYY_BUCBP</name>
<feature type="chain" id="PRO_0000055648" description="Tyrosine--tRNA ligase">
    <location>
        <begin position="1"/>
        <end position="424"/>
    </location>
</feature>
<feature type="domain" description="S4 RNA-binding" evidence="1">
    <location>
        <begin position="356"/>
        <end position="414"/>
    </location>
</feature>
<feature type="short sequence motif" description="'HIGH' region">
    <location>
        <begin position="42"/>
        <end position="51"/>
    </location>
</feature>
<feature type="short sequence motif" description="'KMSKS' region">
    <location>
        <begin position="235"/>
        <end position="239"/>
    </location>
</feature>
<feature type="binding site" evidence="1">
    <location>
        <position position="37"/>
    </location>
    <ligand>
        <name>L-tyrosine</name>
        <dbReference type="ChEBI" id="CHEBI:58315"/>
    </ligand>
</feature>
<feature type="binding site" evidence="1">
    <location>
        <position position="175"/>
    </location>
    <ligand>
        <name>L-tyrosine</name>
        <dbReference type="ChEBI" id="CHEBI:58315"/>
    </ligand>
</feature>
<feature type="binding site" evidence="1">
    <location>
        <position position="179"/>
    </location>
    <ligand>
        <name>L-tyrosine</name>
        <dbReference type="ChEBI" id="CHEBI:58315"/>
    </ligand>
</feature>
<feature type="binding site" evidence="1">
    <location>
        <position position="238"/>
    </location>
    <ligand>
        <name>ATP</name>
        <dbReference type="ChEBI" id="CHEBI:30616"/>
    </ligand>
</feature>
<proteinExistence type="inferred from homology"/>
<sequence>MLTDTLIQEFQDRNLISQITNEIDLKNILLHNKISLYCGFDITADSLHVGHILPLLCLRRFQNLGHRPVILMGGGTSLIGDPSFKLLERQLNSIELVHTWKQKITKQLSLFLKFNVGKNNALIVDNYEWFKNINVLTFLRDIGKHFSINQMIVRDAIQRRIKRLDQGISFTEFSYNLLQAYDFYFLNKQLDVILQIGGSDQWGNIISGIDLIRRLHKKRAYGITVPLLTKKDGRKFGKTELDTIWLDKMKTSPYKFYQYWMNISDSDIYSFLKMFTFLSLSEIKALKDTTKPTELNSVKKILAEYLTNLVHGSNEVRAIQRITSSLFSGKFSEMKETDFFQLEQDGMPSVQLYNSGNLQQLLVYSRLALSRSHAKSMIVSNSVRINNIIQNNPFYILCNRDKMYHKYTLLSRGKKNFCLLCWTK</sequence>
<reference key="1">
    <citation type="journal article" date="2003" name="Proc. Natl. Acad. Sci. U.S.A.">
        <title>Reductive genome evolution in Buchnera aphidicola.</title>
        <authorList>
            <person name="van Ham R.C.H.J."/>
            <person name="Kamerbeek J."/>
            <person name="Palacios C."/>
            <person name="Rausell C."/>
            <person name="Abascal F."/>
            <person name="Bastolla U."/>
            <person name="Fernandez J.M."/>
            <person name="Jimenez L."/>
            <person name="Postigo M."/>
            <person name="Silva F.J."/>
            <person name="Tamames J."/>
            <person name="Viguera E."/>
            <person name="Latorre A."/>
            <person name="Valencia A."/>
            <person name="Moran F."/>
            <person name="Moya A."/>
        </authorList>
    </citation>
    <scope>NUCLEOTIDE SEQUENCE [LARGE SCALE GENOMIC DNA]</scope>
    <source>
        <strain>Bp</strain>
    </source>
</reference>
<dbReference type="EC" id="6.1.1.1" evidence="1"/>
<dbReference type="EMBL" id="AE016826">
    <property type="protein sequence ID" value="AAO26849.1"/>
    <property type="molecule type" value="Genomic_DNA"/>
</dbReference>
<dbReference type="RefSeq" id="WP_011091250.1">
    <property type="nucleotide sequence ID" value="NC_004545.1"/>
</dbReference>
<dbReference type="SMR" id="Q89AW3"/>
<dbReference type="STRING" id="224915.bbp_115"/>
<dbReference type="KEGG" id="bab:bbp_115"/>
<dbReference type="eggNOG" id="COG0162">
    <property type="taxonomic scope" value="Bacteria"/>
</dbReference>
<dbReference type="HOGENOM" id="CLU_024003_0_3_6"/>
<dbReference type="OrthoDB" id="9804243at2"/>
<dbReference type="Proteomes" id="UP000000601">
    <property type="component" value="Chromosome"/>
</dbReference>
<dbReference type="GO" id="GO:0005829">
    <property type="term" value="C:cytosol"/>
    <property type="evidence" value="ECO:0007669"/>
    <property type="project" value="TreeGrafter"/>
</dbReference>
<dbReference type="GO" id="GO:0005524">
    <property type="term" value="F:ATP binding"/>
    <property type="evidence" value="ECO:0007669"/>
    <property type="project" value="UniProtKB-UniRule"/>
</dbReference>
<dbReference type="GO" id="GO:0003723">
    <property type="term" value="F:RNA binding"/>
    <property type="evidence" value="ECO:0007669"/>
    <property type="project" value="UniProtKB-KW"/>
</dbReference>
<dbReference type="GO" id="GO:0004831">
    <property type="term" value="F:tyrosine-tRNA ligase activity"/>
    <property type="evidence" value="ECO:0007669"/>
    <property type="project" value="UniProtKB-UniRule"/>
</dbReference>
<dbReference type="GO" id="GO:0006437">
    <property type="term" value="P:tyrosyl-tRNA aminoacylation"/>
    <property type="evidence" value="ECO:0007669"/>
    <property type="project" value="UniProtKB-UniRule"/>
</dbReference>
<dbReference type="CDD" id="cd00165">
    <property type="entry name" value="S4"/>
    <property type="match status" value="1"/>
</dbReference>
<dbReference type="CDD" id="cd00805">
    <property type="entry name" value="TyrRS_core"/>
    <property type="match status" value="1"/>
</dbReference>
<dbReference type="FunFam" id="1.10.240.10:FF:000001">
    <property type="entry name" value="Tyrosine--tRNA ligase"/>
    <property type="match status" value="1"/>
</dbReference>
<dbReference type="FunFam" id="3.40.50.620:FF:000008">
    <property type="entry name" value="Tyrosine--tRNA ligase"/>
    <property type="match status" value="1"/>
</dbReference>
<dbReference type="Gene3D" id="3.40.50.620">
    <property type="entry name" value="HUPs"/>
    <property type="match status" value="1"/>
</dbReference>
<dbReference type="Gene3D" id="3.10.290.10">
    <property type="entry name" value="RNA-binding S4 domain"/>
    <property type="match status" value="1"/>
</dbReference>
<dbReference type="Gene3D" id="1.10.240.10">
    <property type="entry name" value="Tyrosyl-Transfer RNA Synthetase"/>
    <property type="match status" value="1"/>
</dbReference>
<dbReference type="HAMAP" id="MF_02006">
    <property type="entry name" value="Tyr_tRNA_synth_type1"/>
    <property type="match status" value="1"/>
</dbReference>
<dbReference type="InterPro" id="IPR002305">
    <property type="entry name" value="aa-tRNA-synth_Ic"/>
</dbReference>
<dbReference type="InterPro" id="IPR014729">
    <property type="entry name" value="Rossmann-like_a/b/a_fold"/>
</dbReference>
<dbReference type="InterPro" id="IPR002942">
    <property type="entry name" value="S4_RNA-bd"/>
</dbReference>
<dbReference type="InterPro" id="IPR036986">
    <property type="entry name" value="S4_RNA-bd_sf"/>
</dbReference>
<dbReference type="InterPro" id="IPR054608">
    <property type="entry name" value="SYY-like_C"/>
</dbReference>
<dbReference type="InterPro" id="IPR002307">
    <property type="entry name" value="Tyr-tRNA-ligase"/>
</dbReference>
<dbReference type="InterPro" id="IPR024088">
    <property type="entry name" value="Tyr-tRNA-ligase_bac-type"/>
</dbReference>
<dbReference type="InterPro" id="IPR024107">
    <property type="entry name" value="Tyr-tRNA-ligase_bac_1"/>
</dbReference>
<dbReference type="NCBIfam" id="TIGR00234">
    <property type="entry name" value="tyrS"/>
    <property type="match status" value="1"/>
</dbReference>
<dbReference type="PANTHER" id="PTHR11766:SF0">
    <property type="entry name" value="TYROSINE--TRNA LIGASE, MITOCHONDRIAL"/>
    <property type="match status" value="1"/>
</dbReference>
<dbReference type="PANTHER" id="PTHR11766">
    <property type="entry name" value="TYROSYL-TRNA SYNTHETASE"/>
    <property type="match status" value="1"/>
</dbReference>
<dbReference type="Pfam" id="PF22421">
    <property type="entry name" value="SYY_C-terminal"/>
    <property type="match status" value="1"/>
</dbReference>
<dbReference type="Pfam" id="PF00579">
    <property type="entry name" value="tRNA-synt_1b"/>
    <property type="match status" value="1"/>
</dbReference>
<dbReference type="PRINTS" id="PR01040">
    <property type="entry name" value="TRNASYNTHTYR"/>
</dbReference>
<dbReference type="SMART" id="SM00363">
    <property type="entry name" value="S4"/>
    <property type="match status" value="1"/>
</dbReference>
<dbReference type="SUPFAM" id="SSF55174">
    <property type="entry name" value="Alpha-L RNA-binding motif"/>
    <property type="match status" value="1"/>
</dbReference>
<dbReference type="SUPFAM" id="SSF52374">
    <property type="entry name" value="Nucleotidylyl transferase"/>
    <property type="match status" value="1"/>
</dbReference>
<dbReference type="PROSITE" id="PS50889">
    <property type="entry name" value="S4"/>
    <property type="match status" value="1"/>
</dbReference>
<comment type="function">
    <text evidence="1">Catalyzes the attachment of tyrosine to tRNA(Tyr) in a two-step reaction: tyrosine is first activated by ATP to form Tyr-AMP and then transferred to the acceptor end of tRNA(Tyr).</text>
</comment>
<comment type="catalytic activity">
    <reaction evidence="1">
        <text>tRNA(Tyr) + L-tyrosine + ATP = L-tyrosyl-tRNA(Tyr) + AMP + diphosphate + H(+)</text>
        <dbReference type="Rhea" id="RHEA:10220"/>
        <dbReference type="Rhea" id="RHEA-COMP:9706"/>
        <dbReference type="Rhea" id="RHEA-COMP:9707"/>
        <dbReference type="ChEBI" id="CHEBI:15378"/>
        <dbReference type="ChEBI" id="CHEBI:30616"/>
        <dbReference type="ChEBI" id="CHEBI:33019"/>
        <dbReference type="ChEBI" id="CHEBI:58315"/>
        <dbReference type="ChEBI" id="CHEBI:78442"/>
        <dbReference type="ChEBI" id="CHEBI:78536"/>
        <dbReference type="ChEBI" id="CHEBI:456215"/>
        <dbReference type="EC" id="6.1.1.1"/>
    </reaction>
</comment>
<comment type="subunit">
    <text evidence="1">Homodimer.</text>
</comment>
<comment type="subcellular location">
    <subcellularLocation>
        <location evidence="1">Cytoplasm</location>
    </subcellularLocation>
</comment>
<comment type="similarity">
    <text evidence="1">Belongs to the class-I aminoacyl-tRNA synthetase family. TyrS type 1 subfamily.</text>
</comment>
<protein>
    <recommendedName>
        <fullName evidence="1">Tyrosine--tRNA ligase</fullName>
        <ecNumber evidence="1">6.1.1.1</ecNumber>
    </recommendedName>
    <alternativeName>
        <fullName evidence="1">Tyrosyl-tRNA synthetase</fullName>
        <shortName evidence="1">TyrRS</shortName>
    </alternativeName>
</protein>